<sequence length="119" mass="13687">MPRVKGGTVTRKRRKKIVKLAKGYYGSKHLLFKVANQAVMKSYQYAYRDRRQKKRDFRRLWIARINAAARMQDLSYSKLMHGLKLAGIDINRKMLADLAVNDIASFNTLADSAKKALAK</sequence>
<accession>Q71YN5</accession>
<name>RL20_LISMF</name>
<protein>
    <recommendedName>
        <fullName evidence="1">Large ribosomal subunit protein bL20</fullName>
    </recommendedName>
    <alternativeName>
        <fullName evidence="2">50S ribosomal protein L20</fullName>
    </alternativeName>
</protein>
<keyword id="KW-0687">Ribonucleoprotein</keyword>
<keyword id="KW-0689">Ribosomal protein</keyword>
<keyword id="KW-0694">RNA-binding</keyword>
<keyword id="KW-0699">rRNA-binding</keyword>
<organism>
    <name type="scientific">Listeria monocytogenes serotype 4b (strain F2365)</name>
    <dbReference type="NCBI Taxonomy" id="265669"/>
    <lineage>
        <taxon>Bacteria</taxon>
        <taxon>Bacillati</taxon>
        <taxon>Bacillota</taxon>
        <taxon>Bacilli</taxon>
        <taxon>Bacillales</taxon>
        <taxon>Listeriaceae</taxon>
        <taxon>Listeria</taxon>
    </lineage>
</organism>
<dbReference type="EMBL" id="AE017262">
    <property type="protein sequence ID" value="AAT04579.1"/>
    <property type="molecule type" value="Genomic_DNA"/>
</dbReference>
<dbReference type="RefSeq" id="WP_003720097.1">
    <property type="nucleotide sequence ID" value="NC_002973.6"/>
</dbReference>
<dbReference type="SMR" id="Q71YN5"/>
<dbReference type="GeneID" id="93239692"/>
<dbReference type="KEGG" id="lmf:LMOf2365_1808"/>
<dbReference type="HOGENOM" id="CLU_123265_0_1_9"/>
<dbReference type="GO" id="GO:1990904">
    <property type="term" value="C:ribonucleoprotein complex"/>
    <property type="evidence" value="ECO:0007669"/>
    <property type="project" value="UniProtKB-KW"/>
</dbReference>
<dbReference type="GO" id="GO:0005840">
    <property type="term" value="C:ribosome"/>
    <property type="evidence" value="ECO:0007669"/>
    <property type="project" value="UniProtKB-KW"/>
</dbReference>
<dbReference type="GO" id="GO:0019843">
    <property type="term" value="F:rRNA binding"/>
    <property type="evidence" value="ECO:0007669"/>
    <property type="project" value="UniProtKB-UniRule"/>
</dbReference>
<dbReference type="GO" id="GO:0003735">
    <property type="term" value="F:structural constituent of ribosome"/>
    <property type="evidence" value="ECO:0007669"/>
    <property type="project" value="InterPro"/>
</dbReference>
<dbReference type="GO" id="GO:0000027">
    <property type="term" value="P:ribosomal large subunit assembly"/>
    <property type="evidence" value="ECO:0007669"/>
    <property type="project" value="UniProtKB-UniRule"/>
</dbReference>
<dbReference type="GO" id="GO:0006412">
    <property type="term" value="P:translation"/>
    <property type="evidence" value="ECO:0007669"/>
    <property type="project" value="InterPro"/>
</dbReference>
<dbReference type="CDD" id="cd07026">
    <property type="entry name" value="Ribosomal_L20"/>
    <property type="match status" value="1"/>
</dbReference>
<dbReference type="FunFam" id="1.10.1900.20:FF:000001">
    <property type="entry name" value="50S ribosomal protein L20"/>
    <property type="match status" value="1"/>
</dbReference>
<dbReference type="Gene3D" id="6.10.160.10">
    <property type="match status" value="1"/>
</dbReference>
<dbReference type="Gene3D" id="1.10.1900.20">
    <property type="entry name" value="Ribosomal protein L20"/>
    <property type="match status" value="1"/>
</dbReference>
<dbReference type="HAMAP" id="MF_00382">
    <property type="entry name" value="Ribosomal_bL20"/>
    <property type="match status" value="1"/>
</dbReference>
<dbReference type="InterPro" id="IPR005813">
    <property type="entry name" value="Ribosomal_bL20"/>
</dbReference>
<dbReference type="InterPro" id="IPR049946">
    <property type="entry name" value="RIBOSOMAL_L20_CS"/>
</dbReference>
<dbReference type="InterPro" id="IPR035566">
    <property type="entry name" value="Ribosomal_protein_bL20_C"/>
</dbReference>
<dbReference type="NCBIfam" id="TIGR01032">
    <property type="entry name" value="rplT_bact"/>
    <property type="match status" value="1"/>
</dbReference>
<dbReference type="PANTHER" id="PTHR10986">
    <property type="entry name" value="39S RIBOSOMAL PROTEIN L20"/>
    <property type="match status" value="1"/>
</dbReference>
<dbReference type="Pfam" id="PF00453">
    <property type="entry name" value="Ribosomal_L20"/>
    <property type="match status" value="1"/>
</dbReference>
<dbReference type="PRINTS" id="PR00062">
    <property type="entry name" value="RIBOSOMALL20"/>
</dbReference>
<dbReference type="SUPFAM" id="SSF74731">
    <property type="entry name" value="Ribosomal protein L20"/>
    <property type="match status" value="1"/>
</dbReference>
<dbReference type="PROSITE" id="PS00937">
    <property type="entry name" value="RIBOSOMAL_L20"/>
    <property type="match status" value="1"/>
</dbReference>
<reference key="1">
    <citation type="journal article" date="2004" name="Nucleic Acids Res.">
        <title>Whole genome comparisons of serotype 4b and 1/2a strains of the food-borne pathogen Listeria monocytogenes reveal new insights into the core genome components of this species.</title>
        <authorList>
            <person name="Nelson K.E."/>
            <person name="Fouts D.E."/>
            <person name="Mongodin E.F."/>
            <person name="Ravel J."/>
            <person name="DeBoy R.T."/>
            <person name="Kolonay J.F."/>
            <person name="Rasko D.A."/>
            <person name="Angiuoli S.V."/>
            <person name="Gill S.R."/>
            <person name="Paulsen I.T."/>
            <person name="Peterson J.D."/>
            <person name="White O."/>
            <person name="Nelson W.C."/>
            <person name="Nierman W.C."/>
            <person name="Beanan M.J."/>
            <person name="Brinkac L.M."/>
            <person name="Daugherty S.C."/>
            <person name="Dodson R.J."/>
            <person name="Durkin A.S."/>
            <person name="Madupu R."/>
            <person name="Haft D.H."/>
            <person name="Selengut J."/>
            <person name="Van Aken S.E."/>
            <person name="Khouri H.M."/>
            <person name="Fedorova N."/>
            <person name="Forberger H.A."/>
            <person name="Tran B."/>
            <person name="Kathariou S."/>
            <person name="Wonderling L.D."/>
            <person name="Uhlich G.A."/>
            <person name="Bayles D.O."/>
            <person name="Luchansky J.B."/>
            <person name="Fraser C.M."/>
        </authorList>
    </citation>
    <scope>NUCLEOTIDE SEQUENCE [LARGE SCALE GENOMIC DNA]</scope>
    <source>
        <strain>F2365</strain>
    </source>
</reference>
<evidence type="ECO:0000255" key="1">
    <source>
        <dbReference type="HAMAP-Rule" id="MF_00382"/>
    </source>
</evidence>
<evidence type="ECO:0000305" key="2"/>
<feature type="chain" id="PRO_0000177175" description="Large ribosomal subunit protein bL20">
    <location>
        <begin position="1"/>
        <end position="119"/>
    </location>
</feature>
<gene>
    <name evidence="1" type="primary">rplT</name>
    <name type="ordered locus">LMOf2365_1808</name>
</gene>
<proteinExistence type="inferred from homology"/>
<comment type="function">
    <text evidence="1">Binds directly to 23S ribosomal RNA and is necessary for the in vitro assembly process of the 50S ribosomal subunit. It is not involved in the protein synthesizing functions of that subunit.</text>
</comment>
<comment type="similarity">
    <text evidence="1">Belongs to the bacterial ribosomal protein bL20 family.</text>
</comment>